<proteinExistence type="inferred from homology"/>
<organism>
    <name type="scientific">Saccharophagus degradans (strain 2-40 / ATCC 43961 / DSM 17024)</name>
    <dbReference type="NCBI Taxonomy" id="203122"/>
    <lineage>
        <taxon>Bacteria</taxon>
        <taxon>Pseudomonadati</taxon>
        <taxon>Pseudomonadota</taxon>
        <taxon>Gammaproteobacteria</taxon>
        <taxon>Cellvibrionales</taxon>
        <taxon>Cellvibrionaceae</taxon>
        <taxon>Saccharophagus</taxon>
    </lineage>
</organism>
<comment type="function">
    <text evidence="1">Methyltransferase required for the conversion of demethylmenaquinol (DMKH2) to menaquinol (MKH2) and the conversion of 2-polyprenyl-6-methoxy-1,4-benzoquinol (DDMQH2) to 2-polyprenyl-3-methyl-6-methoxy-1,4-benzoquinol (DMQH2).</text>
</comment>
<comment type="catalytic activity">
    <reaction evidence="1">
        <text>a 2-demethylmenaquinol + S-adenosyl-L-methionine = a menaquinol + S-adenosyl-L-homocysteine + H(+)</text>
        <dbReference type="Rhea" id="RHEA:42640"/>
        <dbReference type="Rhea" id="RHEA-COMP:9539"/>
        <dbReference type="Rhea" id="RHEA-COMP:9563"/>
        <dbReference type="ChEBI" id="CHEBI:15378"/>
        <dbReference type="ChEBI" id="CHEBI:18151"/>
        <dbReference type="ChEBI" id="CHEBI:55437"/>
        <dbReference type="ChEBI" id="CHEBI:57856"/>
        <dbReference type="ChEBI" id="CHEBI:59789"/>
        <dbReference type="EC" id="2.1.1.163"/>
    </reaction>
</comment>
<comment type="catalytic activity">
    <reaction evidence="1">
        <text>a 2-methoxy-6-(all-trans-polyprenyl)benzene-1,4-diol + S-adenosyl-L-methionine = a 5-methoxy-2-methyl-3-(all-trans-polyprenyl)benzene-1,4-diol + S-adenosyl-L-homocysteine + H(+)</text>
        <dbReference type="Rhea" id="RHEA:28286"/>
        <dbReference type="Rhea" id="RHEA-COMP:10858"/>
        <dbReference type="Rhea" id="RHEA-COMP:10859"/>
        <dbReference type="ChEBI" id="CHEBI:15378"/>
        <dbReference type="ChEBI" id="CHEBI:57856"/>
        <dbReference type="ChEBI" id="CHEBI:59789"/>
        <dbReference type="ChEBI" id="CHEBI:84166"/>
        <dbReference type="ChEBI" id="CHEBI:84167"/>
        <dbReference type="EC" id="2.1.1.201"/>
    </reaction>
</comment>
<comment type="pathway">
    <text evidence="1">Quinol/quinone metabolism; menaquinone biosynthesis; menaquinol from 1,4-dihydroxy-2-naphthoate: step 2/2.</text>
</comment>
<comment type="pathway">
    <text evidence="1">Cofactor biosynthesis; ubiquinone biosynthesis.</text>
</comment>
<comment type="similarity">
    <text evidence="1">Belongs to the class I-like SAM-binding methyltransferase superfamily. MenG/UbiE family.</text>
</comment>
<name>UBIE_SACD2</name>
<accession>Q21H69</accession>
<evidence type="ECO:0000255" key="1">
    <source>
        <dbReference type="HAMAP-Rule" id="MF_01813"/>
    </source>
</evidence>
<protein>
    <recommendedName>
        <fullName evidence="1">Ubiquinone/menaquinone biosynthesis C-methyltransferase UbiE</fullName>
        <ecNumber evidence="1">2.1.1.163</ecNumber>
        <ecNumber evidence="1">2.1.1.201</ecNumber>
    </recommendedName>
    <alternativeName>
        <fullName evidence="1">2-methoxy-6-polyprenyl-1,4-benzoquinol methylase</fullName>
    </alternativeName>
    <alternativeName>
        <fullName evidence="1">Demethylmenaquinone methyltransferase</fullName>
    </alternativeName>
</protein>
<keyword id="KW-0474">Menaquinone biosynthesis</keyword>
<keyword id="KW-0489">Methyltransferase</keyword>
<keyword id="KW-1185">Reference proteome</keyword>
<keyword id="KW-0949">S-adenosyl-L-methionine</keyword>
<keyword id="KW-0808">Transferase</keyword>
<keyword id="KW-0831">Ubiquinone biosynthesis</keyword>
<reference key="1">
    <citation type="journal article" date="2008" name="PLoS Genet.">
        <title>Complete genome sequence of the complex carbohydrate-degrading marine bacterium, Saccharophagus degradans strain 2-40 T.</title>
        <authorList>
            <person name="Weiner R.M."/>
            <person name="Taylor L.E. II"/>
            <person name="Henrissat B."/>
            <person name="Hauser L."/>
            <person name="Land M."/>
            <person name="Coutinho P.M."/>
            <person name="Rancurel C."/>
            <person name="Saunders E.H."/>
            <person name="Longmire A.G."/>
            <person name="Zhang H."/>
            <person name="Bayer E.A."/>
            <person name="Gilbert H.J."/>
            <person name="Larimer F."/>
            <person name="Zhulin I.B."/>
            <person name="Ekborg N.A."/>
            <person name="Lamed R."/>
            <person name="Richardson P.M."/>
            <person name="Borovok I."/>
            <person name="Hutcheson S."/>
        </authorList>
    </citation>
    <scope>NUCLEOTIDE SEQUENCE [LARGE SCALE GENOMIC DNA]</scope>
    <source>
        <strain>2-40 / ATCC 43961 / DSM 17024</strain>
    </source>
</reference>
<sequence length="249" mass="27407">MSDEQTTHFGYEKVDVKDKARRVAGVFHSVAAKYDIMNDVMSGGIHRIWKQFTIELSGVRSGHKVLDIAGGTGDLTKKFSRIVGPTGQVVLADINESMLNVGRDKLIDSGVAGNVVYTQADAQYLPFPDNTFDCITIAFGLRNVTDKDLAIASMLRVLKPGGRLLILEFTKPQNALVEKAYDFYSFKILPTMGQIIAQDADSYRYLAESIRMHPDQETLKGMMDAAGFAQTKYHNMTGGIVALHTGIKP</sequence>
<feature type="chain" id="PRO_1000056289" description="Ubiquinone/menaquinone biosynthesis C-methyltransferase UbiE">
    <location>
        <begin position="1"/>
        <end position="249"/>
    </location>
</feature>
<feature type="binding site" evidence="1">
    <location>
        <position position="72"/>
    </location>
    <ligand>
        <name>S-adenosyl-L-methionine</name>
        <dbReference type="ChEBI" id="CHEBI:59789"/>
    </ligand>
</feature>
<feature type="binding site" evidence="1">
    <location>
        <position position="93"/>
    </location>
    <ligand>
        <name>S-adenosyl-L-methionine</name>
        <dbReference type="ChEBI" id="CHEBI:59789"/>
    </ligand>
</feature>
<feature type="binding site" evidence="1">
    <location>
        <begin position="121"/>
        <end position="122"/>
    </location>
    <ligand>
        <name>S-adenosyl-L-methionine</name>
        <dbReference type="ChEBI" id="CHEBI:59789"/>
    </ligand>
</feature>
<gene>
    <name evidence="1" type="primary">ubiE</name>
    <name type="ordered locus">Sde_2700</name>
</gene>
<dbReference type="EC" id="2.1.1.163" evidence="1"/>
<dbReference type="EC" id="2.1.1.201" evidence="1"/>
<dbReference type="EMBL" id="CP000282">
    <property type="protein sequence ID" value="ABD81960.1"/>
    <property type="molecule type" value="Genomic_DNA"/>
</dbReference>
<dbReference type="RefSeq" id="WP_011469177.1">
    <property type="nucleotide sequence ID" value="NC_007912.1"/>
</dbReference>
<dbReference type="SMR" id="Q21H69"/>
<dbReference type="STRING" id="203122.Sde_2700"/>
<dbReference type="GeneID" id="98614358"/>
<dbReference type="KEGG" id="sde:Sde_2700"/>
<dbReference type="eggNOG" id="COG2226">
    <property type="taxonomic scope" value="Bacteria"/>
</dbReference>
<dbReference type="HOGENOM" id="CLU_037990_0_0_6"/>
<dbReference type="OrthoDB" id="9808140at2"/>
<dbReference type="UniPathway" id="UPA00079">
    <property type="reaction ID" value="UER00169"/>
</dbReference>
<dbReference type="UniPathway" id="UPA00232"/>
<dbReference type="Proteomes" id="UP000001947">
    <property type="component" value="Chromosome"/>
</dbReference>
<dbReference type="GO" id="GO:0008425">
    <property type="term" value="F:2-methoxy-6-polyprenyl-1,4-benzoquinol methyltransferase activity"/>
    <property type="evidence" value="ECO:0007669"/>
    <property type="project" value="UniProtKB-UniRule"/>
</dbReference>
<dbReference type="GO" id="GO:0043770">
    <property type="term" value="F:demethylmenaquinone methyltransferase activity"/>
    <property type="evidence" value="ECO:0007669"/>
    <property type="project" value="UniProtKB-UniRule"/>
</dbReference>
<dbReference type="GO" id="GO:0009060">
    <property type="term" value="P:aerobic respiration"/>
    <property type="evidence" value="ECO:0007669"/>
    <property type="project" value="UniProtKB-UniRule"/>
</dbReference>
<dbReference type="GO" id="GO:0009234">
    <property type="term" value="P:menaquinone biosynthetic process"/>
    <property type="evidence" value="ECO:0007669"/>
    <property type="project" value="UniProtKB-UniRule"/>
</dbReference>
<dbReference type="GO" id="GO:0032259">
    <property type="term" value="P:methylation"/>
    <property type="evidence" value="ECO:0007669"/>
    <property type="project" value="UniProtKB-KW"/>
</dbReference>
<dbReference type="CDD" id="cd02440">
    <property type="entry name" value="AdoMet_MTases"/>
    <property type="match status" value="1"/>
</dbReference>
<dbReference type="FunFam" id="3.40.50.150:FF:000014">
    <property type="entry name" value="Ubiquinone/menaquinone biosynthesis C-methyltransferase UbiE"/>
    <property type="match status" value="1"/>
</dbReference>
<dbReference type="Gene3D" id="3.40.50.150">
    <property type="entry name" value="Vaccinia Virus protein VP39"/>
    <property type="match status" value="1"/>
</dbReference>
<dbReference type="HAMAP" id="MF_01813">
    <property type="entry name" value="MenG_UbiE_methyltr"/>
    <property type="match status" value="1"/>
</dbReference>
<dbReference type="InterPro" id="IPR029063">
    <property type="entry name" value="SAM-dependent_MTases_sf"/>
</dbReference>
<dbReference type="InterPro" id="IPR004033">
    <property type="entry name" value="UbiE/COQ5_MeTrFase"/>
</dbReference>
<dbReference type="InterPro" id="IPR023576">
    <property type="entry name" value="UbiE/COQ5_MeTrFase_CS"/>
</dbReference>
<dbReference type="NCBIfam" id="TIGR01934">
    <property type="entry name" value="MenG_MenH_UbiE"/>
    <property type="match status" value="1"/>
</dbReference>
<dbReference type="NCBIfam" id="NF001240">
    <property type="entry name" value="PRK00216.1-1"/>
    <property type="match status" value="1"/>
</dbReference>
<dbReference type="NCBIfam" id="NF001244">
    <property type="entry name" value="PRK00216.1-5"/>
    <property type="match status" value="1"/>
</dbReference>
<dbReference type="PANTHER" id="PTHR43591:SF24">
    <property type="entry name" value="2-METHOXY-6-POLYPRENYL-1,4-BENZOQUINOL METHYLASE, MITOCHONDRIAL"/>
    <property type="match status" value="1"/>
</dbReference>
<dbReference type="PANTHER" id="PTHR43591">
    <property type="entry name" value="METHYLTRANSFERASE"/>
    <property type="match status" value="1"/>
</dbReference>
<dbReference type="Pfam" id="PF01209">
    <property type="entry name" value="Ubie_methyltran"/>
    <property type="match status" value="1"/>
</dbReference>
<dbReference type="SUPFAM" id="SSF53335">
    <property type="entry name" value="S-adenosyl-L-methionine-dependent methyltransferases"/>
    <property type="match status" value="1"/>
</dbReference>
<dbReference type="PROSITE" id="PS51608">
    <property type="entry name" value="SAM_MT_UBIE"/>
    <property type="match status" value="1"/>
</dbReference>
<dbReference type="PROSITE" id="PS01183">
    <property type="entry name" value="UBIE_1"/>
    <property type="match status" value="1"/>
</dbReference>
<dbReference type="PROSITE" id="PS01184">
    <property type="entry name" value="UBIE_2"/>
    <property type="match status" value="1"/>
</dbReference>